<dbReference type="EMBL" id="BX161416">
    <property type="protein sequence ID" value="CAD61891.1"/>
    <property type="status" value="ALT_INIT"/>
    <property type="molecule type" value="mRNA"/>
</dbReference>
<dbReference type="EMBL" id="AL049829">
    <property type="status" value="NOT_ANNOTATED_CDS"/>
    <property type="molecule type" value="Genomic_DNA"/>
</dbReference>
<dbReference type="EMBL" id="BC020565">
    <property type="protein sequence ID" value="AAH20565.1"/>
    <property type="status" value="ALT_INIT"/>
    <property type="molecule type" value="mRNA"/>
</dbReference>
<dbReference type="EMBL" id="BC090870">
    <property type="protein sequence ID" value="AAH90870.1"/>
    <property type="molecule type" value="mRNA"/>
</dbReference>
<dbReference type="EMBL" id="BC111015">
    <property type="protein sequence ID" value="AAI11016.1"/>
    <property type="molecule type" value="mRNA"/>
</dbReference>
<dbReference type="EMBL" id="DQ658848">
    <property type="protein sequence ID" value="ABG45942.1"/>
    <property type="status" value="ALT_INIT"/>
    <property type="molecule type" value="mRNA"/>
</dbReference>
<dbReference type="EMBL" id="AJ243122">
    <property type="protein sequence ID" value="CAC17762.1"/>
    <property type="status" value="ALT_INIT"/>
    <property type="molecule type" value="Genomic_DNA"/>
</dbReference>
<dbReference type="EMBL" id="AJ243653">
    <property type="protein sequence ID" value="CAC01119.1"/>
    <property type="status" value="ALT_INIT"/>
    <property type="molecule type" value="mRNA"/>
</dbReference>
<dbReference type="CCDS" id="CCDS9593.2">
    <molecule id="Q8WUG5-1"/>
</dbReference>
<dbReference type="CCDS" id="CCDS9594.3">
    <molecule id="Q8WUG5-2"/>
</dbReference>
<dbReference type="RefSeq" id="NP_001275979.1">
    <property type="nucleotide sequence ID" value="NM_001289050.1"/>
</dbReference>
<dbReference type="RefSeq" id="NP_057693.3">
    <molecule id="Q8WUG5-2"/>
    <property type="nucleotide sequence ID" value="NM_016609.4"/>
</dbReference>
<dbReference type="RefSeq" id="NP_065105.2">
    <molecule id="Q8WUG5-1"/>
    <property type="nucleotide sequence ID" value="NM_020372.3"/>
</dbReference>
<dbReference type="RefSeq" id="XP_005267804.1">
    <property type="nucleotide sequence ID" value="XM_005267747.4"/>
</dbReference>
<dbReference type="RefSeq" id="XP_016876850.1">
    <property type="nucleotide sequence ID" value="XM_017021361.1"/>
</dbReference>
<dbReference type="RefSeq" id="XP_016876851.1">
    <property type="nucleotide sequence ID" value="XM_017021362.1"/>
</dbReference>
<dbReference type="SMR" id="Q8WUG5"/>
<dbReference type="BioGRID" id="119461">
    <property type="interactions" value="7"/>
</dbReference>
<dbReference type="FunCoup" id="Q8WUG5">
    <property type="interactions" value="177"/>
</dbReference>
<dbReference type="IntAct" id="Q8WUG5">
    <property type="interactions" value="5"/>
</dbReference>
<dbReference type="MINT" id="Q8WUG5"/>
<dbReference type="STRING" id="9606.ENSP00000380437"/>
<dbReference type="TCDB" id="2.A.1.19.8">
    <property type="family name" value="the major facilitator superfamily (mfs)"/>
</dbReference>
<dbReference type="GlyCosmos" id="Q8WUG5">
    <property type="glycosylation" value="2 sites, No reported glycans"/>
</dbReference>
<dbReference type="GlyGen" id="Q8WUG5">
    <property type="glycosylation" value="4 sites, 1 O-linked glycan (1 site)"/>
</dbReference>
<dbReference type="PhosphoSitePlus" id="Q8WUG5"/>
<dbReference type="BioMuta" id="SLC22A17"/>
<dbReference type="DMDM" id="27805426"/>
<dbReference type="jPOST" id="Q8WUG5"/>
<dbReference type="MassIVE" id="Q8WUG5"/>
<dbReference type="PaxDb" id="9606-ENSP00000380437"/>
<dbReference type="PeptideAtlas" id="Q8WUG5"/>
<dbReference type="ProteomicsDB" id="74671">
    <molecule id="Q8WUG5-1"/>
</dbReference>
<dbReference type="ProteomicsDB" id="74672">
    <molecule id="Q8WUG5-2"/>
</dbReference>
<dbReference type="ProteomicsDB" id="74673">
    <molecule id="Q8WUG5-3"/>
</dbReference>
<dbReference type="Antibodypedia" id="111">
    <property type="antibodies" value="213 antibodies from 32 providers"/>
</dbReference>
<dbReference type="DNASU" id="51310"/>
<dbReference type="Ensembl" id="ENST00000354772.10">
    <molecule id="Q8WUG5-2"/>
    <property type="protein sequence ID" value="ENSP00000346824.5"/>
    <property type="gene ID" value="ENSG00000092096.19"/>
</dbReference>
<dbReference type="Ensembl" id="ENST00000397267.6">
    <molecule id="Q8WUG5-1"/>
    <property type="protein sequence ID" value="ENSP00000380437.2"/>
    <property type="gene ID" value="ENSG00000092096.19"/>
</dbReference>
<dbReference type="GeneID" id="51310"/>
<dbReference type="KEGG" id="hsa:51310"/>
<dbReference type="MANE-Select" id="ENST00000354772.10">
    <molecule id="Q8WUG5-2"/>
    <property type="protein sequence ID" value="ENSP00000346824.5"/>
    <property type="RefSeq nucleotide sequence ID" value="NM_016609.7"/>
    <property type="RefSeq protein sequence ID" value="NP_057693.4"/>
</dbReference>
<dbReference type="UCSC" id="uc001wjl.5">
    <molecule id="Q8WUG5-1"/>
    <property type="organism name" value="human"/>
</dbReference>
<dbReference type="AGR" id="HGNC:23095"/>
<dbReference type="CTD" id="51310"/>
<dbReference type="DisGeNET" id="51310"/>
<dbReference type="GeneCards" id="SLC22A17"/>
<dbReference type="HGNC" id="HGNC:23095">
    <property type="gene designation" value="SLC22A17"/>
</dbReference>
<dbReference type="HPA" id="ENSG00000092096">
    <property type="expression patterns" value="Group enriched (brain, choroid plexus, pituitary gland)"/>
</dbReference>
<dbReference type="MIM" id="611461">
    <property type="type" value="gene"/>
</dbReference>
<dbReference type="neXtProt" id="NX_Q8WUG5"/>
<dbReference type="OpenTargets" id="ENSG00000092096"/>
<dbReference type="PharmGKB" id="PA134879149"/>
<dbReference type="VEuPathDB" id="HostDB:ENSG00000092096"/>
<dbReference type="eggNOG" id="KOG0255">
    <property type="taxonomic scope" value="Eukaryota"/>
</dbReference>
<dbReference type="GeneTree" id="ENSGT00940000160959"/>
<dbReference type="HOGENOM" id="CLU_001265_33_6_1"/>
<dbReference type="InParanoid" id="Q8WUG5"/>
<dbReference type="OMA" id="HHVIYSS"/>
<dbReference type="OrthoDB" id="6612291at2759"/>
<dbReference type="PAN-GO" id="Q8WUG5">
    <property type="GO annotations" value="0 GO annotations based on evolutionary models"/>
</dbReference>
<dbReference type="PhylomeDB" id="Q8WUG5"/>
<dbReference type="TreeFam" id="TF335753"/>
<dbReference type="PathwayCommons" id="Q8WUG5"/>
<dbReference type="Reactome" id="R-HSA-917937">
    <property type="pathway name" value="Iron uptake and transport"/>
</dbReference>
<dbReference type="SignaLink" id="Q8WUG5"/>
<dbReference type="BioGRID-ORCS" id="51310">
    <property type="hits" value="34 hits in 1151 CRISPR screens"/>
</dbReference>
<dbReference type="ChiTaRS" id="SLC22A17">
    <property type="organism name" value="human"/>
</dbReference>
<dbReference type="GenomeRNAi" id="51310"/>
<dbReference type="Pharos" id="Q8WUG5">
    <property type="development level" value="Tbio"/>
</dbReference>
<dbReference type="PRO" id="PR:Q8WUG5"/>
<dbReference type="Proteomes" id="UP000005640">
    <property type="component" value="Chromosome 14"/>
</dbReference>
<dbReference type="RNAct" id="Q8WUG5">
    <property type="molecule type" value="protein"/>
</dbReference>
<dbReference type="Bgee" id="ENSG00000092096">
    <property type="expression patterns" value="Expressed in right hemisphere of cerebellum and 133 other cell types or tissues"/>
</dbReference>
<dbReference type="ExpressionAtlas" id="Q8WUG5">
    <property type="expression patterns" value="baseline and differential"/>
</dbReference>
<dbReference type="GO" id="GO:0031090">
    <property type="term" value="C:organelle membrane"/>
    <property type="evidence" value="ECO:0000314"/>
    <property type="project" value="UniProtKB"/>
</dbReference>
<dbReference type="GO" id="GO:0005886">
    <property type="term" value="C:plasma membrane"/>
    <property type="evidence" value="ECO:0000314"/>
    <property type="project" value="UniProtKB"/>
</dbReference>
<dbReference type="GO" id="GO:0005774">
    <property type="term" value="C:vacuolar membrane"/>
    <property type="evidence" value="ECO:0007669"/>
    <property type="project" value="UniProtKB-SubCell"/>
</dbReference>
<dbReference type="GO" id="GO:0004888">
    <property type="term" value="F:transmembrane signaling receptor activity"/>
    <property type="evidence" value="ECO:0000250"/>
    <property type="project" value="UniProtKB"/>
</dbReference>
<dbReference type="GO" id="GO:0022857">
    <property type="term" value="F:transmembrane transporter activity"/>
    <property type="evidence" value="ECO:0000304"/>
    <property type="project" value="Reactome"/>
</dbReference>
<dbReference type="GO" id="GO:0006879">
    <property type="term" value="P:intracellular iron ion homeostasis"/>
    <property type="evidence" value="ECO:0000304"/>
    <property type="project" value="Reactome"/>
</dbReference>
<dbReference type="GO" id="GO:0015891">
    <property type="term" value="P:siderophore transport"/>
    <property type="evidence" value="ECO:0000250"/>
    <property type="project" value="UniProtKB"/>
</dbReference>
<dbReference type="CDD" id="cd17445">
    <property type="entry name" value="MFS_SLC22A17"/>
    <property type="match status" value="1"/>
</dbReference>
<dbReference type="DisProt" id="DP01769"/>
<dbReference type="FunFam" id="1.20.1250.20:FF:000159">
    <property type="entry name" value="Solute carrier family 22 member 17"/>
    <property type="match status" value="1"/>
</dbReference>
<dbReference type="InterPro" id="IPR020846">
    <property type="entry name" value="MFS_dom"/>
</dbReference>
<dbReference type="InterPro" id="IPR005828">
    <property type="entry name" value="MFS_sugar_transport-like"/>
</dbReference>
<dbReference type="InterPro" id="IPR005829">
    <property type="entry name" value="Sugar_transporter_CS"/>
</dbReference>
<dbReference type="PANTHER" id="PTHR24064">
    <property type="entry name" value="SOLUTE CARRIER FAMILY 22 MEMBER"/>
    <property type="match status" value="1"/>
</dbReference>
<dbReference type="Pfam" id="PF00083">
    <property type="entry name" value="Sugar_tr"/>
    <property type="match status" value="1"/>
</dbReference>
<dbReference type="PROSITE" id="PS50850">
    <property type="entry name" value="MFS"/>
    <property type="match status" value="1"/>
</dbReference>
<dbReference type="PROSITE" id="PS00216">
    <property type="entry name" value="SUGAR_TRANSPORT_1"/>
    <property type="match status" value="2"/>
</dbReference>
<proteinExistence type="evidence at protein level"/>
<comment type="function">
    <text evidence="1">Cell surface receptor for LCN2 (24p3) that plays a key role in iron homeostasis and transport. Able to bind iron-bound LCN2 (holo-24p3), followed by internalization of holo-24p3 and release of iron, thereby increasing intracellular iron concentration and leading to inhibition of apoptosis. Also binds iron-free LCN2 (apo-24p3), followed by internalization of apo-24p3 and its association with an intracellular siderophore, leading to iron chelation and iron transfer to the extracellular medium, thereby reducing intracellular iron concentration and resulting in apoptosis (By similarity).</text>
</comment>
<comment type="interaction">
    <interactant intactId="EBI-11722858">
        <id>Q8WUG5</id>
    </interactant>
    <interactant intactId="EBI-395883">
        <id>P07237</id>
        <label>P4HB</label>
    </interactant>
    <organismsDiffer>false</organismsDiffer>
    <experiments>3</experiments>
</comment>
<comment type="subcellular location">
    <subcellularLocation>
        <location evidence="5">Cell membrane</location>
        <topology evidence="5">Multi-pass membrane protein</topology>
    </subcellularLocation>
    <subcellularLocation>
        <location evidence="5">Vacuole membrane</location>
        <topology evidence="5">Multi-pass membrane protein</topology>
    </subcellularLocation>
    <text>Upon LCN2-binding, it is internalized.</text>
</comment>
<comment type="alternative products">
    <event type="alternative splicing"/>
    <isoform>
        <id>Q8WUG5-1</id>
        <name>1</name>
        <name>NgalR-1</name>
        <sequence type="displayed"/>
    </isoform>
    <isoform>
        <id>Q8WUG5-2</id>
        <name>2</name>
        <name>NgalR-2</name>
        <sequence type="described" ref="VSP_003774"/>
    </isoform>
    <isoform>
        <id>Q8WUG5-3</id>
        <name>3</name>
        <name>NgalR-3</name>
        <sequence type="described" ref="VSP_039782 VSP_039783"/>
    </isoform>
</comment>
<comment type="tissue specificity">
    <text>Expressed in brain.</text>
</comment>
<comment type="induction">
    <text evidence="4 6">Expression is activated by RUNX3. Repressed by the oncoprotein BCR-ABL; BCR-ABL misregulates expression by inducing a switch in binding from RUNX3 to RUNX1, a repressor of 24p3R expression, through a Ras signaling pathway.</text>
</comment>
<comment type="similarity">
    <text evidence="11">Belongs to the major facilitator (TC 2.A.1) superfamily. Organic cation transporter (TC 2.A.1.19) family.</text>
</comment>
<comment type="caution">
    <text evidence="11">The protein uses an unusual AUG start codon with leucine. Ribosome profiling data indicate that translation initiates from the non-AUG (CTG) codon used here.</text>
</comment>
<comment type="sequence caution" evidence="11">
    <conflict type="erroneous initiation">
        <sequence resource="EMBL-CDS" id="AAH20565"/>
    </conflict>
    <text>Truncated N-terminus.</text>
</comment>
<comment type="sequence caution" evidence="11">
    <conflict type="erroneous initiation">
        <sequence resource="EMBL-CDS" id="ABG45942"/>
    </conflict>
    <text>Truncated N-terminus.</text>
</comment>
<comment type="sequence caution" evidence="11">
    <conflict type="erroneous initiation">
        <sequence resource="EMBL-CDS" id="CAC01119"/>
    </conflict>
    <text>Truncated N-terminus.</text>
</comment>
<comment type="sequence caution" evidence="11">
    <conflict type="erroneous initiation">
        <sequence resource="EMBL-CDS" id="CAC17762"/>
    </conflict>
    <text>Truncated N-terminus.</text>
</comment>
<comment type="sequence caution" evidence="11">
    <conflict type="erroneous initiation">
        <sequence resource="EMBL-CDS" id="CAD61891"/>
    </conflict>
    <text>Truncated N-terminus.</text>
</comment>
<accession>Q8WUG5</accession>
<accession>A0A1C7CYV9</accession>
<accession>A4UA13</accession>
<accession>A8MUT0</accession>
<accession>Q2TAB0</accession>
<accession>Q5BKY8</accession>
<accession>Q86U04</accession>
<accession>Q9H1D3</accession>
<accession>Q9NQD5</accession>
<protein>
    <recommendedName>
        <fullName>Solute carrier family 22 member 17</fullName>
    </recommendedName>
    <alternativeName>
        <fullName>24p3 receptor</fullName>
        <shortName>24p3R</shortName>
    </alternativeName>
    <alternativeName>
        <fullName>Brain-type organic cation transporter</fullName>
    </alternativeName>
    <alternativeName>
        <fullName>Lipocalin-2 receptor</fullName>
    </alternativeName>
    <alternativeName>
        <fullName>Neutrophil gelatinase-associated lipocalin receptor</fullName>
        <shortName>NgalR</shortName>
    </alternativeName>
</protein>
<gene>
    <name type="primary">SLC22A17</name>
    <name type="synonym">BOCT</name>
    <name type="synonym">BOIT</name>
</gene>
<feature type="chain" id="PRO_0000220507" description="Solute carrier family 22 member 17">
    <location>
        <begin position="1"/>
        <end position="649"/>
    </location>
</feature>
<feature type="transmembrane region" description="Helical" evidence="2">
    <location>
        <begin position="211"/>
        <end position="231"/>
    </location>
</feature>
<feature type="transmembrane region" description="Helical" evidence="2">
    <location>
        <begin position="240"/>
        <end position="260"/>
    </location>
</feature>
<feature type="transmembrane region" description="Helical" evidence="2">
    <location>
        <begin position="265"/>
        <end position="285"/>
    </location>
</feature>
<feature type="transmembrane region" description="Helical" evidence="2">
    <location>
        <begin position="300"/>
        <end position="320"/>
    </location>
</feature>
<feature type="transmembrane region" description="Helical" evidence="2">
    <location>
        <begin position="330"/>
        <end position="350"/>
    </location>
</feature>
<feature type="transmembrane region" description="Helical" evidence="2">
    <location>
        <begin position="414"/>
        <end position="433"/>
    </location>
</feature>
<feature type="transmembrane region" description="Helical" evidence="2">
    <location>
        <begin position="448"/>
        <end position="468"/>
    </location>
</feature>
<feature type="transmembrane region" description="Helical" evidence="2">
    <location>
        <begin position="477"/>
        <end position="497"/>
    </location>
</feature>
<feature type="transmembrane region" description="Helical" evidence="2">
    <location>
        <begin position="526"/>
        <end position="546"/>
    </location>
</feature>
<feature type="transmembrane region" description="Helical" evidence="2">
    <location>
        <begin position="557"/>
        <end position="577"/>
    </location>
</feature>
<feature type="transmembrane region" description="Helical" evidence="2">
    <location>
        <begin position="584"/>
        <end position="604"/>
    </location>
</feature>
<feature type="region of interest" description="Disordered" evidence="3">
    <location>
        <begin position="1"/>
        <end position="70"/>
    </location>
</feature>
<feature type="compositionally biased region" description="Polar residues" evidence="3">
    <location>
        <begin position="24"/>
        <end position="34"/>
    </location>
</feature>
<feature type="compositionally biased region" description="Basic and acidic residues" evidence="3">
    <location>
        <begin position="47"/>
        <end position="57"/>
    </location>
</feature>
<feature type="glycosylation site" description="N-linked (GlcNAc...) asparagine" evidence="2">
    <location>
        <position position="134"/>
    </location>
</feature>
<feature type="glycosylation site" description="N-linked (GlcNAc...) asparagine" evidence="2">
    <location>
        <position position="143"/>
    </location>
</feature>
<feature type="splice variant" id="VSP_039782" description="In isoform 3." evidence="8">
    <original>RLELCDPTQRLRVALAGELVGVGGHFLFLGLA</original>
    <variation>PNDHRSLHPLPVLWLAWFVPGVRTVADSEAAD</variation>
    <location>
        <begin position="287"/>
        <end position="318"/>
    </location>
</feature>
<feature type="splice variant" id="VSP_039783" description="In isoform 3." evidence="8">
    <location>
        <begin position="319"/>
        <end position="649"/>
    </location>
</feature>
<feature type="splice variant" id="VSP_003774" description="In isoform 2." evidence="7 9 10">
    <original>CEHPIFPTVWAQQGNPNRD</original>
    <variation>Y</variation>
    <location>
        <begin position="499"/>
        <end position="517"/>
    </location>
</feature>
<feature type="sequence conflict" description="In Ref. 4; ABG45942." evidence="11" ref="4">
    <original>E</original>
    <variation>G</variation>
    <location>
        <position position="214"/>
    </location>
</feature>
<feature type="sequence conflict" description="In Ref. 4; ABG45942." evidence="11" ref="4">
    <original>R</original>
    <variation>G</variation>
    <location>
        <position position="235"/>
    </location>
</feature>
<feature type="sequence conflict" description="In Ref. 3; CAC01119." evidence="11" ref="3">
    <original>F</original>
    <variation>S</variation>
    <location>
        <position position="404"/>
    </location>
</feature>
<reference key="1">
    <citation type="submission" date="2003-01" db="EMBL/GenBank/DDBJ databases">
        <title>Full-length cDNA libraries and normalization.</title>
        <authorList>
            <person name="Li W.B."/>
            <person name="Gruber C."/>
            <person name="Jessee J."/>
            <person name="Polayes D."/>
        </authorList>
    </citation>
    <scope>NUCLEOTIDE SEQUENCE [LARGE SCALE MRNA] (ISOFORM 2)</scope>
    <source>
        <tissue>Neuroblastoma</tissue>
    </source>
</reference>
<reference key="2">
    <citation type="journal article" date="2003" name="Nature">
        <title>The DNA sequence and analysis of human chromosome 14.</title>
        <authorList>
            <person name="Heilig R."/>
            <person name="Eckenberg R."/>
            <person name="Petit J.-L."/>
            <person name="Fonknechten N."/>
            <person name="Da Silva C."/>
            <person name="Cattolico L."/>
            <person name="Levy M."/>
            <person name="Barbe V."/>
            <person name="De Berardinis V."/>
            <person name="Ureta-Vidal A."/>
            <person name="Pelletier E."/>
            <person name="Vico V."/>
            <person name="Anthouard V."/>
            <person name="Rowen L."/>
            <person name="Madan A."/>
            <person name="Qin S."/>
            <person name="Sun H."/>
            <person name="Du H."/>
            <person name="Pepin K."/>
            <person name="Artiguenave F."/>
            <person name="Robert C."/>
            <person name="Cruaud C."/>
            <person name="Bruels T."/>
            <person name="Jaillon O."/>
            <person name="Friedlander L."/>
            <person name="Samson G."/>
            <person name="Brottier P."/>
            <person name="Cure S."/>
            <person name="Segurens B."/>
            <person name="Aniere F."/>
            <person name="Samain S."/>
            <person name="Crespeau H."/>
            <person name="Abbasi N."/>
            <person name="Aiach N."/>
            <person name="Boscus D."/>
            <person name="Dickhoff R."/>
            <person name="Dors M."/>
            <person name="Dubois I."/>
            <person name="Friedman C."/>
            <person name="Gouyvenoux M."/>
            <person name="James R."/>
            <person name="Madan A."/>
            <person name="Mairey-Estrada B."/>
            <person name="Mangenot S."/>
            <person name="Martins N."/>
            <person name="Menard M."/>
            <person name="Oztas S."/>
            <person name="Ratcliffe A."/>
            <person name="Shaffer T."/>
            <person name="Trask B."/>
            <person name="Vacherie B."/>
            <person name="Bellemere C."/>
            <person name="Belser C."/>
            <person name="Besnard-Gonnet M."/>
            <person name="Bartol-Mavel D."/>
            <person name="Boutard M."/>
            <person name="Briez-Silla S."/>
            <person name="Combette S."/>
            <person name="Dufosse-Laurent V."/>
            <person name="Ferron C."/>
            <person name="Lechaplais C."/>
            <person name="Louesse C."/>
            <person name="Muselet D."/>
            <person name="Magdelenat G."/>
            <person name="Pateau E."/>
            <person name="Petit E."/>
            <person name="Sirvain-Trukniewicz P."/>
            <person name="Trybou A."/>
            <person name="Vega-Czarny N."/>
            <person name="Bataille E."/>
            <person name="Bluet E."/>
            <person name="Bordelais I."/>
            <person name="Dubois M."/>
            <person name="Dumont C."/>
            <person name="Guerin T."/>
            <person name="Haffray S."/>
            <person name="Hammadi R."/>
            <person name="Muanga J."/>
            <person name="Pellouin V."/>
            <person name="Robert D."/>
            <person name="Wunderle E."/>
            <person name="Gauguet G."/>
            <person name="Roy A."/>
            <person name="Sainte-Marthe L."/>
            <person name="Verdier J."/>
            <person name="Verdier-Discala C."/>
            <person name="Hillier L.W."/>
            <person name="Fulton L."/>
            <person name="McPherson J."/>
            <person name="Matsuda F."/>
            <person name="Wilson R."/>
            <person name="Scarpelli C."/>
            <person name="Gyapay G."/>
            <person name="Wincker P."/>
            <person name="Saurin W."/>
            <person name="Quetier F."/>
            <person name="Waterston R."/>
            <person name="Hood L."/>
            <person name="Weissenbach J."/>
        </authorList>
    </citation>
    <scope>NUCLEOTIDE SEQUENCE [LARGE SCALE GENOMIC DNA]</scope>
</reference>
<reference key="3">
    <citation type="journal article" date="2004" name="Genome Res.">
        <title>The status, quality, and expansion of the NIH full-length cDNA project: the Mammalian Gene Collection (MGC).</title>
        <authorList>
            <consortium name="The MGC Project Team"/>
        </authorList>
    </citation>
    <scope>NUCLEOTIDE SEQUENCE [LARGE SCALE MRNA] OF 94-649 (ISOFORM 1)</scope>
    <scope>NUCLEOTIDE SEQUENCE [LARGE SCALE MRNA] OF 183-649 (ISOFORM 2)</scope>
    <source>
        <tissue>Brain</tissue>
    </source>
</reference>
<reference key="4">
    <citation type="journal article" date="2007" name="Biochem. J.">
        <title>A novel alternative spliced variant of neutrophil gelatinase-associated lipocalin receptor in oesophageal carcinoma cells.</title>
        <authorList>
            <person name="Fang W.K."/>
            <person name="Xu L.Y."/>
            <person name="Lu X.F."/>
            <person name="Liao L.D."/>
            <person name="Cai W.J."/>
            <person name="Shen Z.Y."/>
            <person name="Li E.M."/>
        </authorList>
    </citation>
    <scope>NUCLEOTIDE SEQUENCE [MRNA] OF 110-649 (ISOFORM 3)</scope>
    <scope>SUBCELLULAR LOCATION</scope>
</reference>
<reference key="5">
    <citation type="submission" date="2000-08" db="EMBL/GenBank/DDBJ databases">
        <title>Cloning, functional expression and gene structure of a human brain organic cation transporter.</title>
        <authorList>
            <person name="Bruess M."/>
            <person name="Hayer M."/>
            <person name="Boenisch H."/>
        </authorList>
    </citation>
    <scope>NUCLEOTIDE SEQUENCE [GENOMIC DNA / MRNA] OF 235-649 (ISOFORM 2)</scope>
    <source>
        <tissue>Brain</tissue>
    </source>
</reference>
<reference key="6">
    <citation type="journal article" date="2005" name="Cell">
        <title>A cell-surface receptor for lipocalin 24p3 selectively mediates apoptosis and iron uptake.</title>
        <authorList>
            <person name="Devireddy L.R."/>
            <person name="Gazin C."/>
            <person name="Zhu X."/>
            <person name="Green M.R."/>
        </authorList>
    </citation>
    <scope>INDUCTION</scope>
</reference>
<reference key="7">
    <citation type="journal article" date="2009" name="EMBO J.">
        <title>Transcription and signalling pathways involved in BCR-ABL-mediated misregulation of 24p3 and 24p3R.</title>
        <authorList>
            <person name="Sheng Z."/>
            <person name="Wang S.Z."/>
            <person name="Green M.R."/>
        </authorList>
    </citation>
    <scope>INDUCTION</scope>
</reference>
<organism>
    <name type="scientific">Homo sapiens</name>
    <name type="common">Human</name>
    <dbReference type="NCBI Taxonomy" id="9606"/>
    <lineage>
        <taxon>Eukaryota</taxon>
        <taxon>Metazoa</taxon>
        <taxon>Chordata</taxon>
        <taxon>Craniata</taxon>
        <taxon>Vertebrata</taxon>
        <taxon>Euteleostomi</taxon>
        <taxon>Mammalia</taxon>
        <taxon>Eutheria</taxon>
        <taxon>Euarchontoglires</taxon>
        <taxon>Primates</taxon>
        <taxon>Haplorrhini</taxon>
        <taxon>Catarrhini</taxon>
        <taxon>Hominidae</taxon>
        <taxon>Homo</taxon>
    </lineage>
</organism>
<name>S22AH_HUMAN</name>
<keyword id="KW-0025">Alternative splicing</keyword>
<keyword id="KW-1003">Cell membrane</keyword>
<keyword id="KW-0325">Glycoprotein</keyword>
<keyword id="KW-0406">Ion transport</keyword>
<keyword id="KW-0408">Iron</keyword>
<keyword id="KW-0410">Iron transport</keyword>
<keyword id="KW-0472">Membrane</keyword>
<keyword id="KW-1267">Proteomics identification</keyword>
<keyword id="KW-0675">Receptor</keyword>
<keyword id="KW-1185">Reference proteome</keyword>
<keyword id="KW-0812">Transmembrane</keyword>
<keyword id="KW-1133">Transmembrane helix</keyword>
<keyword id="KW-0813">Transport</keyword>
<keyword id="KW-0926">Vacuole</keyword>
<sequence>MAPRVATGTPEPNGGGGGKIDNTVEITPTSNGQVGTLGDAVPTEQLQGEREREREGEGDAGGDGLGSSLSLAVPPGPLSFEALLAQVGALGGGQQLQLGLCCLPVLFVALGMASDPIFTLAPPLHCHYGAFPPNASGWEQPPNASGVSVASAALAASAASRVATSTDPSCSGFAPPDFNHCLKDWDYNGLPVLTTNAIGQWDLVCDLGWQVILEQILFILGFASGYLFLGYPADRFGRRGIVLLTLGLVGPCGVGGAAAGSSTGVMALRFLLGFLLAGVDLGVYLMRLELCDPTQRLRVALAGELVGVGGHFLFLGLALVSKDWRFLQRMITAPCILFLFYGWPGLFLESARWLIVKRQIEEAQSVLRILAERNRPHGQMLGEEAQEALQDLENTCPLPATSSFSFASLLNYRNIWKNLLILGFTNFIAHAIRHCYQPVGGGGSPSDFYLCSLLASGTAALACVFLGVTVDRFGRRGILLLSMTLTGIASLVLLGLWDCEHPIFPTVWAQQGNPNRDLNEAAITTFSVLGLFSSQAAAILSTLLAAEVIPTTVRGRGLGLIMALGALGGLSGPAQRLHMGHGAFLQHVVLAACALLCILSIMLLPETKRKLLPEVLRDGELCRRPSLLRQPPPTRCDHVPLLATPNPAL</sequence>
<evidence type="ECO:0000250" key="1"/>
<evidence type="ECO:0000255" key="2"/>
<evidence type="ECO:0000256" key="3">
    <source>
        <dbReference type="SAM" id="MobiDB-lite"/>
    </source>
</evidence>
<evidence type="ECO:0000269" key="4">
    <source>
    </source>
</evidence>
<evidence type="ECO:0000269" key="5">
    <source>
    </source>
</evidence>
<evidence type="ECO:0000269" key="6">
    <source>
    </source>
</evidence>
<evidence type="ECO:0000303" key="7">
    <source>
    </source>
</evidence>
<evidence type="ECO:0000303" key="8">
    <source>
    </source>
</evidence>
<evidence type="ECO:0000303" key="9">
    <source ref="1"/>
</evidence>
<evidence type="ECO:0000303" key="10">
    <source ref="5"/>
</evidence>
<evidence type="ECO:0000305" key="11"/>